<dbReference type="EC" id="2.7.7.7" evidence="1"/>
<dbReference type="EMBL" id="AP009351">
    <property type="protein sequence ID" value="BAF68105.1"/>
    <property type="molecule type" value="Genomic_DNA"/>
</dbReference>
<dbReference type="RefSeq" id="WP_000140176.1">
    <property type="nucleotide sequence ID" value="NZ_JBBIAE010000010.1"/>
</dbReference>
<dbReference type="SMR" id="A6QIC3"/>
<dbReference type="KEGG" id="sae:NWMN_1833"/>
<dbReference type="HOGENOM" id="CLU_012348_1_2_9"/>
<dbReference type="Proteomes" id="UP000006386">
    <property type="component" value="Chromosome"/>
</dbReference>
<dbReference type="GO" id="GO:0005829">
    <property type="term" value="C:cytosol"/>
    <property type="evidence" value="ECO:0007669"/>
    <property type="project" value="TreeGrafter"/>
</dbReference>
<dbReference type="GO" id="GO:0003684">
    <property type="term" value="F:damaged DNA binding"/>
    <property type="evidence" value="ECO:0007669"/>
    <property type="project" value="InterPro"/>
</dbReference>
<dbReference type="GO" id="GO:0003887">
    <property type="term" value="F:DNA-directed DNA polymerase activity"/>
    <property type="evidence" value="ECO:0007669"/>
    <property type="project" value="UniProtKB-UniRule"/>
</dbReference>
<dbReference type="GO" id="GO:0000287">
    <property type="term" value="F:magnesium ion binding"/>
    <property type="evidence" value="ECO:0007669"/>
    <property type="project" value="UniProtKB-UniRule"/>
</dbReference>
<dbReference type="GO" id="GO:0006261">
    <property type="term" value="P:DNA-templated DNA replication"/>
    <property type="evidence" value="ECO:0007669"/>
    <property type="project" value="UniProtKB-UniRule"/>
</dbReference>
<dbReference type="GO" id="GO:0042276">
    <property type="term" value="P:error-prone translesion synthesis"/>
    <property type="evidence" value="ECO:0007669"/>
    <property type="project" value="TreeGrafter"/>
</dbReference>
<dbReference type="GO" id="GO:0009432">
    <property type="term" value="P:SOS response"/>
    <property type="evidence" value="ECO:0007669"/>
    <property type="project" value="TreeGrafter"/>
</dbReference>
<dbReference type="CDD" id="cd03586">
    <property type="entry name" value="PolY_Pol_IV_kappa"/>
    <property type="match status" value="1"/>
</dbReference>
<dbReference type="FunFam" id="3.30.1490.100:FF:000004">
    <property type="entry name" value="DNA polymerase IV"/>
    <property type="match status" value="1"/>
</dbReference>
<dbReference type="FunFam" id="3.40.1170.60:FF:000001">
    <property type="entry name" value="DNA polymerase IV"/>
    <property type="match status" value="1"/>
</dbReference>
<dbReference type="Gene3D" id="3.30.70.270">
    <property type="match status" value="1"/>
</dbReference>
<dbReference type="Gene3D" id="3.40.1170.60">
    <property type="match status" value="1"/>
</dbReference>
<dbReference type="Gene3D" id="1.10.150.20">
    <property type="entry name" value="5' to 3' exonuclease, C-terminal subdomain"/>
    <property type="match status" value="1"/>
</dbReference>
<dbReference type="Gene3D" id="3.30.1490.100">
    <property type="entry name" value="DNA polymerase, Y-family, little finger domain"/>
    <property type="match status" value="1"/>
</dbReference>
<dbReference type="HAMAP" id="MF_01113">
    <property type="entry name" value="DNApol_IV"/>
    <property type="match status" value="1"/>
</dbReference>
<dbReference type="InterPro" id="IPR043502">
    <property type="entry name" value="DNA/RNA_pol_sf"/>
</dbReference>
<dbReference type="InterPro" id="IPR036775">
    <property type="entry name" value="DNA_pol_Y-fam_lit_finger_sf"/>
</dbReference>
<dbReference type="InterPro" id="IPR017961">
    <property type="entry name" value="DNA_pol_Y-fam_little_finger"/>
</dbReference>
<dbReference type="InterPro" id="IPR050116">
    <property type="entry name" value="DNA_polymerase-Y"/>
</dbReference>
<dbReference type="InterPro" id="IPR022880">
    <property type="entry name" value="DNApol_IV"/>
</dbReference>
<dbReference type="InterPro" id="IPR043128">
    <property type="entry name" value="Rev_trsase/Diguanyl_cyclase"/>
</dbReference>
<dbReference type="InterPro" id="IPR001126">
    <property type="entry name" value="UmuC"/>
</dbReference>
<dbReference type="NCBIfam" id="NF002677">
    <property type="entry name" value="PRK02406.1"/>
    <property type="match status" value="1"/>
</dbReference>
<dbReference type="NCBIfam" id="NF010731">
    <property type="entry name" value="PRK14133.1"/>
    <property type="match status" value="1"/>
</dbReference>
<dbReference type="PANTHER" id="PTHR11076:SF33">
    <property type="entry name" value="DNA POLYMERASE KAPPA"/>
    <property type="match status" value="1"/>
</dbReference>
<dbReference type="PANTHER" id="PTHR11076">
    <property type="entry name" value="DNA REPAIR POLYMERASE UMUC / TRANSFERASE FAMILY MEMBER"/>
    <property type="match status" value="1"/>
</dbReference>
<dbReference type="Pfam" id="PF00817">
    <property type="entry name" value="IMS"/>
    <property type="match status" value="1"/>
</dbReference>
<dbReference type="Pfam" id="PF11799">
    <property type="entry name" value="IMS_C"/>
    <property type="match status" value="1"/>
</dbReference>
<dbReference type="SUPFAM" id="SSF56672">
    <property type="entry name" value="DNA/RNA polymerases"/>
    <property type="match status" value="1"/>
</dbReference>
<dbReference type="SUPFAM" id="SSF100879">
    <property type="entry name" value="Lesion bypass DNA polymerase (Y-family), little finger domain"/>
    <property type="match status" value="1"/>
</dbReference>
<dbReference type="PROSITE" id="PS50173">
    <property type="entry name" value="UMUC"/>
    <property type="match status" value="1"/>
</dbReference>
<sequence length="356" mass="40315">MTERRIIHIDMDYFFAQVEMRDNPKLKGKPVIVGGKASSRGVVSTASYEARKYGVHSAMPMSQAHKLCPNGYFVTSNFGAYRETSAQIMSIFRSYTDKVEPMSLDEAYLDITELVRPDLPASKIAQYIRKDILEQTHLTASAGVSYNKFLAKLASGMNKPDGMTVIDYQNVHDILMTLDIGDFPGVGKASKKVMHDNGIFNGRDLYEKTEFELIRLFGKRGRGLYNKARGIDHSEVKSSRVRKSVGTERTFATDVNDDEEILRKVWELSGKTAERLNKLQKSAKTVTVKIKTYQFETLSKQMSLRDSVSSEEDIYNIAYLLYNDLKDPDVPIRLIGVTVGNLEQSTYKNMTIYDFI</sequence>
<organism>
    <name type="scientific">Staphylococcus aureus (strain Newman)</name>
    <dbReference type="NCBI Taxonomy" id="426430"/>
    <lineage>
        <taxon>Bacteria</taxon>
        <taxon>Bacillati</taxon>
        <taxon>Bacillota</taxon>
        <taxon>Bacilli</taxon>
        <taxon>Bacillales</taxon>
        <taxon>Staphylococcaceae</taxon>
        <taxon>Staphylococcus</taxon>
    </lineage>
</organism>
<gene>
    <name evidence="1" type="primary">dinB</name>
    <name type="ordered locus">NWMN_1833</name>
</gene>
<proteinExistence type="inferred from homology"/>
<feature type="chain" id="PRO_1000084947" description="DNA polymerase IV">
    <location>
        <begin position="1"/>
        <end position="356"/>
    </location>
</feature>
<feature type="domain" description="UmuC" evidence="1">
    <location>
        <begin position="6"/>
        <end position="187"/>
    </location>
</feature>
<feature type="active site" evidence="1">
    <location>
        <position position="106"/>
    </location>
</feature>
<feature type="binding site" evidence="1">
    <location>
        <position position="10"/>
    </location>
    <ligand>
        <name>Mg(2+)</name>
        <dbReference type="ChEBI" id="CHEBI:18420"/>
    </ligand>
</feature>
<feature type="binding site" evidence="1">
    <location>
        <position position="105"/>
    </location>
    <ligand>
        <name>Mg(2+)</name>
        <dbReference type="ChEBI" id="CHEBI:18420"/>
    </ligand>
</feature>
<feature type="site" description="Substrate discrimination" evidence="1">
    <location>
        <position position="15"/>
    </location>
</feature>
<comment type="function">
    <text evidence="1">Poorly processive, error-prone DNA polymerase involved in untargeted mutagenesis. Copies undamaged DNA at stalled replication forks, which arise in vivo from mismatched or misaligned primer ends. These misaligned primers can be extended by PolIV. Exhibits no 3'-5' exonuclease (proofreading) activity. May be involved in translesional synthesis, in conjunction with the beta clamp from PolIII.</text>
</comment>
<comment type="catalytic activity">
    <reaction evidence="1">
        <text>DNA(n) + a 2'-deoxyribonucleoside 5'-triphosphate = DNA(n+1) + diphosphate</text>
        <dbReference type="Rhea" id="RHEA:22508"/>
        <dbReference type="Rhea" id="RHEA-COMP:17339"/>
        <dbReference type="Rhea" id="RHEA-COMP:17340"/>
        <dbReference type="ChEBI" id="CHEBI:33019"/>
        <dbReference type="ChEBI" id="CHEBI:61560"/>
        <dbReference type="ChEBI" id="CHEBI:173112"/>
        <dbReference type="EC" id="2.7.7.7"/>
    </reaction>
</comment>
<comment type="cofactor">
    <cofactor evidence="1">
        <name>Mg(2+)</name>
        <dbReference type="ChEBI" id="CHEBI:18420"/>
    </cofactor>
    <text evidence="1">Binds 2 magnesium ions per subunit.</text>
</comment>
<comment type="subunit">
    <text evidence="1">Monomer.</text>
</comment>
<comment type="subcellular location">
    <subcellularLocation>
        <location evidence="1">Cytoplasm</location>
    </subcellularLocation>
</comment>
<comment type="similarity">
    <text evidence="1">Belongs to the DNA polymerase type-Y family.</text>
</comment>
<protein>
    <recommendedName>
        <fullName evidence="1">DNA polymerase IV</fullName>
        <shortName evidence="1">Pol IV</shortName>
        <ecNumber evidence="1">2.7.7.7</ecNumber>
    </recommendedName>
</protein>
<name>DPO4_STAAE</name>
<keyword id="KW-0963">Cytoplasm</keyword>
<keyword id="KW-0227">DNA damage</keyword>
<keyword id="KW-0234">DNA repair</keyword>
<keyword id="KW-0235">DNA replication</keyword>
<keyword id="KW-0238">DNA-binding</keyword>
<keyword id="KW-0239">DNA-directed DNA polymerase</keyword>
<keyword id="KW-0460">Magnesium</keyword>
<keyword id="KW-0479">Metal-binding</keyword>
<keyword id="KW-0515">Mutator protein</keyword>
<keyword id="KW-0548">Nucleotidyltransferase</keyword>
<keyword id="KW-0808">Transferase</keyword>
<accession>A6QIC3</accession>
<reference key="1">
    <citation type="journal article" date="2008" name="J. Bacteriol.">
        <title>Genome sequence of Staphylococcus aureus strain Newman and comparative analysis of staphylococcal genomes: polymorphism and evolution of two major pathogenicity islands.</title>
        <authorList>
            <person name="Baba T."/>
            <person name="Bae T."/>
            <person name="Schneewind O."/>
            <person name="Takeuchi F."/>
            <person name="Hiramatsu K."/>
        </authorList>
    </citation>
    <scope>NUCLEOTIDE SEQUENCE [LARGE SCALE GENOMIC DNA]</scope>
    <source>
        <strain>Newman</strain>
    </source>
</reference>
<evidence type="ECO:0000255" key="1">
    <source>
        <dbReference type="HAMAP-Rule" id="MF_01113"/>
    </source>
</evidence>